<accession>B7L1N2</accession>
<sequence length="201" mass="20593">MLNQLRPALVLLVALTAITGLAYPLAVTGVAGALFPAKAAGSLIERDGRIVGSSLIGQSFTGECYFHGRPSATTAADPADASKTVAAPYNAANSAGSNLGPTSAALAERVKGDLAALKAENPGRPVPVDLVTTSGSGLDPDVSPEAALFQVPRIARARNLPEDRLRDLVAGQLQGRTLGLLGEPRVNVLALNLVLVDLAKR</sequence>
<keyword id="KW-0067">ATP-binding</keyword>
<keyword id="KW-0997">Cell inner membrane</keyword>
<keyword id="KW-1003">Cell membrane</keyword>
<keyword id="KW-0406">Ion transport</keyword>
<keyword id="KW-0472">Membrane</keyword>
<keyword id="KW-0547">Nucleotide-binding</keyword>
<keyword id="KW-0630">Potassium</keyword>
<keyword id="KW-0633">Potassium transport</keyword>
<keyword id="KW-0812">Transmembrane</keyword>
<keyword id="KW-1133">Transmembrane helix</keyword>
<keyword id="KW-0813">Transport</keyword>
<proteinExistence type="inferred from homology"/>
<protein>
    <recommendedName>
        <fullName evidence="1">Potassium-transporting ATPase KdpC subunit</fullName>
    </recommendedName>
    <alternativeName>
        <fullName evidence="1">ATP phosphohydrolase [potassium-transporting] C chain</fullName>
    </alternativeName>
    <alternativeName>
        <fullName evidence="1">Potassium-binding and translocating subunit C</fullName>
    </alternativeName>
    <alternativeName>
        <fullName evidence="1">Potassium-translocating ATPase C chain</fullName>
    </alternativeName>
</protein>
<organism>
    <name type="scientific">Methylorubrum extorquens (strain CM4 / NCIMB 13688)</name>
    <name type="common">Methylobacterium extorquens</name>
    <dbReference type="NCBI Taxonomy" id="440085"/>
    <lineage>
        <taxon>Bacteria</taxon>
        <taxon>Pseudomonadati</taxon>
        <taxon>Pseudomonadota</taxon>
        <taxon>Alphaproteobacteria</taxon>
        <taxon>Hyphomicrobiales</taxon>
        <taxon>Methylobacteriaceae</taxon>
        <taxon>Methylorubrum</taxon>
    </lineage>
</organism>
<reference key="1">
    <citation type="submission" date="2008-12" db="EMBL/GenBank/DDBJ databases">
        <title>Complete sequence of chromosome of Methylobacterium chloromethanicum CM4.</title>
        <authorList>
            <consortium name="US DOE Joint Genome Institute"/>
            <person name="Lucas S."/>
            <person name="Copeland A."/>
            <person name="Lapidus A."/>
            <person name="Glavina del Rio T."/>
            <person name="Dalin E."/>
            <person name="Tice H."/>
            <person name="Bruce D."/>
            <person name="Goodwin L."/>
            <person name="Pitluck S."/>
            <person name="Chertkov O."/>
            <person name="Brettin T."/>
            <person name="Detter J.C."/>
            <person name="Han C."/>
            <person name="Larimer F."/>
            <person name="Land M."/>
            <person name="Hauser L."/>
            <person name="Kyrpides N."/>
            <person name="Mikhailova N."/>
            <person name="Marx C."/>
            <person name="Richardson P."/>
        </authorList>
    </citation>
    <scope>NUCLEOTIDE SEQUENCE [LARGE SCALE GENOMIC DNA]</scope>
    <source>
        <strain>CM4 / NCIMB 13688</strain>
    </source>
</reference>
<dbReference type="EMBL" id="CP001298">
    <property type="protein sequence ID" value="ACK81126.1"/>
    <property type="molecule type" value="Genomic_DNA"/>
</dbReference>
<dbReference type="RefSeq" id="WP_012605333.1">
    <property type="nucleotide sequence ID" value="NC_011757.1"/>
</dbReference>
<dbReference type="SMR" id="B7L1N2"/>
<dbReference type="KEGG" id="mch:Mchl_0180"/>
<dbReference type="HOGENOM" id="CLU_077094_2_0_5"/>
<dbReference type="Proteomes" id="UP000002385">
    <property type="component" value="Chromosome"/>
</dbReference>
<dbReference type="GO" id="GO:0005886">
    <property type="term" value="C:plasma membrane"/>
    <property type="evidence" value="ECO:0007669"/>
    <property type="project" value="UniProtKB-SubCell"/>
</dbReference>
<dbReference type="GO" id="GO:0005524">
    <property type="term" value="F:ATP binding"/>
    <property type="evidence" value="ECO:0007669"/>
    <property type="project" value="UniProtKB-UniRule"/>
</dbReference>
<dbReference type="GO" id="GO:0008556">
    <property type="term" value="F:P-type potassium transmembrane transporter activity"/>
    <property type="evidence" value="ECO:0007669"/>
    <property type="project" value="InterPro"/>
</dbReference>
<dbReference type="HAMAP" id="MF_00276">
    <property type="entry name" value="KdpC"/>
    <property type="match status" value="1"/>
</dbReference>
<dbReference type="InterPro" id="IPR003820">
    <property type="entry name" value="KdpC"/>
</dbReference>
<dbReference type="NCBIfam" id="TIGR00681">
    <property type="entry name" value="kdpC"/>
    <property type="match status" value="1"/>
</dbReference>
<dbReference type="NCBIfam" id="NF001454">
    <property type="entry name" value="PRK00315.1"/>
    <property type="match status" value="1"/>
</dbReference>
<dbReference type="NCBIfam" id="NF010603">
    <property type="entry name" value="PRK13999.1"/>
    <property type="match status" value="1"/>
</dbReference>
<dbReference type="PANTHER" id="PTHR30042">
    <property type="entry name" value="POTASSIUM-TRANSPORTING ATPASE C CHAIN"/>
    <property type="match status" value="1"/>
</dbReference>
<dbReference type="PANTHER" id="PTHR30042:SF2">
    <property type="entry name" value="POTASSIUM-TRANSPORTING ATPASE KDPC SUBUNIT"/>
    <property type="match status" value="1"/>
</dbReference>
<dbReference type="Pfam" id="PF02669">
    <property type="entry name" value="KdpC"/>
    <property type="match status" value="1"/>
</dbReference>
<dbReference type="PIRSF" id="PIRSF001296">
    <property type="entry name" value="K_ATPase_KdpC"/>
    <property type="match status" value="1"/>
</dbReference>
<comment type="function">
    <text evidence="1">Part of the high-affinity ATP-driven potassium transport (or Kdp) system, which catalyzes the hydrolysis of ATP coupled with the electrogenic transport of potassium into the cytoplasm. This subunit acts as a catalytic chaperone that increases the ATP-binding affinity of the ATP-hydrolyzing subunit KdpB by the formation of a transient KdpB/KdpC/ATP ternary complex.</text>
</comment>
<comment type="subunit">
    <text evidence="1">The system is composed of three essential subunits: KdpA, KdpB and KdpC.</text>
</comment>
<comment type="subcellular location">
    <subcellularLocation>
        <location evidence="1">Cell inner membrane</location>
        <topology evidence="1">Single-pass membrane protein</topology>
    </subcellularLocation>
</comment>
<comment type="similarity">
    <text evidence="1">Belongs to the KdpC family.</text>
</comment>
<gene>
    <name evidence="1" type="primary">kdpC</name>
    <name type="ordered locus">Mchl_0180</name>
</gene>
<evidence type="ECO:0000255" key="1">
    <source>
        <dbReference type="HAMAP-Rule" id="MF_00276"/>
    </source>
</evidence>
<name>KDPC_METC4</name>
<feature type="chain" id="PRO_1000132519" description="Potassium-transporting ATPase KdpC subunit">
    <location>
        <begin position="1"/>
        <end position="201"/>
    </location>
</feature>
<feature type="transmembrane region" description="Helical" evidence="1">
    <location>
        <begin position="7"/>
        <end position="27"/>
    </location>
</feature>